<accession>Q566V3</accession>
<sequence length="435" mass="48590">MAALMYNVSRGLVMLGERSLFQRERYQILVNSRRFLRGLRRRPVAVLYPDGERETLIKSKRATDITSQGFTQKGKARKDVTERAAYKNCSGFVSERAEESSQINKLKLAGLRFEKAPAGDNRLARVSSVARSRAFRDKEGKVLLEGRRLICDALSAGASPQMIFFSLLERLQELPLDKLQQAKLIKVKYEDIKLWSDLVTPQGLIAIFSKPDASRLTFPKDARLQSVPLFLICDNVRDAGNLGTILRCAAAAGGDRVLLSKGCVDAWEPKVLRSAMGAHFRLPVFPNLDWDDISKHLPKNVIVHVADNYSTSTKQLVSGQTENVSSDDYSESDSDDDDDEEEDEDSLPHVKPQVYHECWAQRSAALVIGGETHGLSVEALRLAEETDGKRLFVPMAPGVESLNSAMAAGILLFEGRRQLLMLSDKLRRRARTKML</sequence>
<gene>
    <name type="primary">mrm3a</name>
    <name type="synonym">rnmtl1a</name>
    <name type="ORF">zgc:112452</name>
</gene>
<proteinExistence type="evidence at transcript level"/>
<comment type="function">
    <text evidence="2 6">S-adenosyl-L-methionine-dependent 2'-O-ribose methyltransferase that catalyzes the formation of 2'-O-methylguanosine at position 1485 (Gm1485) in the mitochondrial large subunit ribosomal RNA (mtLSU rRNA), a conserved modification in the peptidyl transferase domain of the mtLSU rRNA. Also required for formation of 2'-O-methyluridine at position 1484 (Um1484) mediated by MRM2.</text>
</comment>
<comment type="catalytic activity">
    <reaction evidence="2">
        <text>a uridine in rRNA + S-adenosyl-L-methionine = a 2'-O-methyluridine in rRNA + S-adenosyl-L-homocysteine + H(+)</text>
        <dbReference type="Rhea" id="RHEA:54152"/>
        <dbReference type="Rhea" id="RHEA-COMP:13812"/>
        <dbReference type="Rhea" id="RHEA-COMP:13814"/>
        <dbReference type="ChEBI" id="CHEBI:15378"/>
        <dbReference type="ChEBI" id="CHEBI:57856"/>
        <dbReference type="ChEBI" id="CHEBI:59789"/>
        <dbReference type="ChEBI" id="CHEBI:65315"/>
        <dbReference type="ChEBI" id="CHEBI:74478"/>
    </reaction>
</comment>
<comment type="subcellular location">
    <subcellularLocation>
        <location evidence="2">Mitochondrion</location>
    </subcellularLocation>
</comment>
<comment type="similarity">
    <text evidence="5">Belongs to the class IV-like SAM-binding methyltransferase superfamily. RNA methyltransferase TrmH family.</text>
</comment>
<evidence type="ECO:0000250" key="1"/>
<evidence type="ECO:0000250" key="2">
    <source>
        <dbReference type="UniProtKB" id="Q9HC36"/>
    </source>
</evidence>
<evidence type="ECO:0000255" key="3"/>
<evidence type="ECO:0000256" key="4">
    <source>
        <dbReference type="SAM" id="MobiDB-lite"/>
    </source>
</evidence>
<evidence type="ECO:0000305" key="5"/>
<evidence type="ECO:0000305" key="6">
    <source>
    </source>
</evidence>
<reference key="1">
    <citation type="submission" date="2005-04" db="EMBL/GenBank/DDBJ databases">
        <authorList>
            <consortium name="NIH - Zebrafish Gene Collection (ZGC) project"/>
        </authorList>
    </citation>
    <scope>NUCLEOTIDE SEQUENCE [LARGE SCALE MRNA]</scope>
    <source>
        <tissue>Olfactory epithelium</tissue>
    </source>
</reference>
<reference key="2">
    <citation type="journal article" date="2014" name="Mol. Biol. Cell">
        <title>MRM2 and MRM3 are involved in biogenesis of the large subunit of the mitochondrial ribosome.</title>
        <authorList>
            <person name="Rorbach J."/>
            <person name="Boesch P."/>
            <person name="Gammage P.A."/>
            <person name="Nicholls T.J."/>
            <person name="Pearce S.F."/>
            <person name="Patel D."/>
            <person name="Hauser A."/>
            <person name="Perocchi F."/>
            <person name="Minczuk M."/>
        </authorList>
    </citation>
    <scope>POSITION OF MODIFIED METHYLGUANOSINE IN MTLSU RRNA</scope>
</reference>
<protein>
    <recommendedName>
        <fullName evidence="2">rRNA methyltransferase 3A, mitochondrial</fullName>
        <ecNumber evidence="2">2.1.1.-</ecNumber>
    </recommendedName>
    <alternativeName>
        <fullName evidence="2">RNA methyltransferase-like protein 1A</fullName>
    </alternativeName>
    <alternativeName>
        <fullName evidence="2">rRNA (guanosine-2'-O)-methyltransferase</fullName>
    </alternativeName>
</protein>
<organism>
    <name type="scientific">Danio rerio</name>
    <name type="common">Zebrafish</name>
    <name type="synonym">Brachydanio rerio</name>
    <dbReference type="NCBI Taxonomy" id="7955"/>
    <lineage>
        <taxon>Eukaryota</taxon>
        <taxon>Metazoa</taxon>
        <taxon>Chordata</taxon>
        <taxon>Craniata</taxon>
        <taxon>Vertebrata</taxon>
        <taxon>Euteleostomi</taxon>
        <taxon>Actinopterygii</taxon>
        <taxon>Neopterygii</taxon>
        <taxon>Teleostei</taxon>
        <taxon>Ostariophysi</taxon>
        <taxon>Cypriniformes</taxon>
        <taxon>Danionidae</taxon>
        <taxon>Danioninae</taxon>
        <taxon>Danio</taxon>
    </lineage>
</organism>
<keyword id="KW-0489">Methyltransferase</keyword>
<keyword id="KW-0496">Mitochondrion</keyword>
<keyword id="KW-1185">Reference proteome</keyword>
<keyword id="KW-0698">rRNA processing</keyword>
<keyword id="KW-0949">S-adenosyl-L-methionine</keyword>
<keyword id="KW-0808">Transferase</keyword>
<keyword id="KW-0809">Transit peptide</keyword>
<name>MRM3A_DANRE</name>
<feature type="transit peptide" description="Mitochondrion" evidence="3">
    <location>
        <begin position="1"/>
        <end position="42"/>
    </location>
</feature>
<feature type="chain" id="PRO_0000311303" description="rRNA methyltransferase 3A, mitochondrial">
    <location>
        <begin position="43"/>
        <end position="435"/>
    </location>
</feature>
<feature type="region of interest" description="Disordered" evidence="4">
    <location>
        <begin position="314"/>
        <end position="351"/>
    </location>
</feature>
<feature type="compositionally biased region" description="Polar residues" evidence="4">
    <location>
        <begin position="314"/>
        <end position="324"/>
    </location>
</feature>
<feature type="compositionally biased region" description="Acidic residues" evidence="4">
    <location>
        <begin position="328"/>
        <end position="345"/>
    </location>
</feature>
<feature type="binding site" evidence="1">
    <location>
        <position position="369"/>
    </location>
    <ligand>
        <name>S-adenosyl-L-methionine</name>
        <dbReference type="ChEBI" id="CHEBI:59789"/>
    </ligand>
</feature>
<feature type="binding site" evidence="1">
    <location>
        <position position="402"/>
    </location>
    <ligand>
        <name>S-adenosyl-L-methionine</name>
        <dbReference type="ChEBI" id="CHEBI:59789"/>
    </ligand>
</feature>
<dbReference type="EC" id="2.1.1.-" evidence="2"/>
<dbReference type="EMBL" id="BC093318">
    <property type="protein sequence ID" value="AAH93318.1"/>
    <property type="molecule type" value="mRNA"/>
</dbReference>
<dbReference type="SMR" id="Q566V3"/>
<dbReference type="FunCoup" id="Q566V3">
    <property type="interactions" value="90"/>
</dbReference>
<dbReference type="STRING" id="7955.ENSDARP00000119941"/>
<dbReference type="PaxDb" id="7955-ENSDARP00000119941"/>
<dbReference type="AGR" id="ZFIN:ZDB-GENE-050417-184"/>
<dbReference type="ZFIN" id="ZDB-GENE-050417-184">
    <property type="gene designation" value="mrm3a"/>
</dbReference>
<dbReference type="eggNOG" id="KOG2506">
    <property type="taxonomic scope" value="Eukaryota"/>
</dbReference>
<dbReference type="InParanoid" id="Q566V3"/>
<dbReference type="OrthoDB" id="270651at2759"/>
<dbReference type="PhylomeDB" id="Q566V3"/>
<dbReference type="PRO" id="PR:Q566V3"/>
<dbReference type="Proteomes" id="UP000000437">
    <property type="component" value="Unplaced"/>
</dbReference>
<dbReference type="GO" id="GO:0005739">
    <property type="term" value="C:mitochondrion"/>
    <property type="evidence" value="ECO:0007669"/>
    <property type="project" value="UniProtKB-SubCell"/>
</dbReference>
<dbReference type="GO" id="GO:0003723">
    <property type="term" value="F:RNA binding"/>
    <property type="evidence" value="ECO:0007669"/>
    <property type="project" value="InterPro"/>
</dbReference>
<dbReference type="GO" id="GO:0008650">
    <property type="term" value="F:rRNA (uridine-2'-O-)-methyltransferase activity"/>
    <property type="evidence" value="ECO:0007669"/>
    <property type="project" value="RHEA"/>
</dbReference>
<dbReference type="CDD" id="cd18106">
    <property type="entry name" value="SpoU-like_RNMTL1"/>
    <property type="match status" value="1"/>
</dbReference>
<dbReference type="Gene3D" id="3.30.1330.30">
    <property type="match status" value="1"/>
</dbReference>
<dbReference type="Gene3D" id="3.40.1280.10">
    <property type="match status" value="1"/>
</dbReference>
<dbReference type="InterPro" id="IPR029028">
    <property type="entry name" value="Alpha/beta_knot_MTases"/>
</dbReference>
<dbReference type="InterPro" id="IPR053888">
    <property type="entry name" value="MRM3-like_sub_bind"/>
</dbReference>
<dbReference type="InterPro" id="IPR029064">
    <property type="entry name" value="Ribosomal_eL30-like_sf"/>
</dbReference>
<dbReference type="InterPro" id="IPR051259">
    <property type="entry name" value="rRNA_Methyltransferase"/>
</dbReference>
<dbReference type="InterPro" id="IPR001537">
    <property type="entry name" value="SpoU_MeTrfase"/>
</dbReference>
<dbReference type="InterPro" id="IPR013123">
    <property type="entry name" value="SpoU_subst-bd"/>
</dbReference>
<dbReference type="InterPro" id="IPR029026">
    <property type="entry name" value="tRNA_m1G_MTases_N"/>
</dbReference>
<dbReference type="PANTHER" id="PTHR43191">
    <property type="entry name" value="RRNA METHYLTRANSFERASE 3"/>
    <property type="match status" value="1"/>
</dbReference>
<dbReference type="PANTHER" id="PTHR43191:SF2">
    <property type="entry name" value="RRNA METHYLTRANSFERASE 3, MITOCHONDRIAL"/>
    <property type="match status" value="1"/>
</dbReference>
<dbReference type="Pfam" id="PF22435">
    <property type="entry name" value="MRM3-like_sub_bind"/>
    <property type="match status" value="1"/>
</dbReference>
<dbReference type="Pfam" id="PF00588">
    <property type="entry name" value="SpoU_methylase"/>
    <property type="match status" value="1"/>
</dbReference>
<dbReference type="SMART" id="SM00967">
    <property type="entry name" value="SpoU_sub_bind"/>
    <property type="match status" value="1"/>
</dbReference>
<dbReference type="SUPFAM" id="SSF75217">
    <property type="entry name" value="alpha/beta knot"/>
    <property type="match status" value="1"/>
</dbReference>
<dbReference type="SUPFAM" id="SSF55315">
    <property type="entry name" value="L30e-like"/>
    <property type="match status" value="1"/>
</dbReference>